<feature type="chain" id="PRO_1000199460" description="Serine--tRNA ligase">
    <location>
        <begin position="1"/>
        <end position="421"/>
    </location>
</feature>
<feature type="binding site" evidence="1">
    <location>
        <begin position="230"/>
        <end position="232"/>
    </location>
    <ligand>
        <name>L-serine</name>
        <dbReference type="ChEBI" id="CHEBI:33384"/>
    </ligand>
</feature>
<feature type="binding site" evidence="1">
    <location>
        <begin position="259"/>
        <end position="261"/>
    </location>
    <ligand>
        <name>ATP</name>
        <dbReference type="ChEBI" id="CHEBI:30616"/>
    </ligand>
</feature>
<feature type="binding site" evidence="1">
    <location>
        <position position="282"/>
    </location>
    <ligand>
        <name>L-serine</name>
        <dbReference type="ChEBI" id="CHEBI:33384"/>
    </ligand>
</feature>
<feature type="binding site" evidence="1">
    <location>
        <begin position="346"/>
        <end position="349"/>
    </location>
    <ligand>
        <name>ATP</name>
        <dbReference type="ChEBI" id="CHEBI:30616"/>
    </ligand>
</feature>
<feature type="binding site" evidence="1">
    <location>
        <position position="381"/>
    </location>
    <ligand>
        <name>L-serine</name>
        <dbReference type="ChEBI" id="CHEBI:33384"/>
    </ligand>
</feature>
<comment type="function">
    <text evidence="1">Catalyzes the attachment of serine to tRNA(Ser). Is also able to aminoacylate tRNA(Sec) with serine, to form the misacylated tRNA L-seryl-tRNA(Sec), which will be further converted into selenocysteinyl-tRNA(Sec).</text>
</comment>
<comment type="catalytic activity">
    <reaction evidence="1">
        <text>tRNA(Ser) + L-serine + ATP = L-seryl-tRNA(Ser) + AMP + diphosphate + H(+)</text>
        <dbReference type="Rhea" id="RHEA:12292"/>
        <dbReference type="Rhea" id="RHEA-COMP:9669"/>
        <dbReference type="Rhea" id="RHEA-COMP:9703"/>
        <dbReference type="ChEBI" id="CHEBI:15378"/>
        <dbReference type="ChEBI" id="CHEBI:30616"/>
        <dbReference type="ChEBI" id="CHEBI:33019"/>
        <dbReference type="ChEBI" id="CHEBI:33384"/>
        <dbReference type="ChEBI" id="CHEBI:78442"/>
        <dbReference type="ChEBI" id="CHEBI:78533"/>
        <dbReference type="ChEBI" id="CHEBI:456215"/>
        <dbReference type="EC" id="6.1.1.11"/>
    </reaction>
</comment>
<comment type="catalytic activity">
    <reaction evidence="1">
        <text>tRNA(Sec) + L-serine + ATP = L-seryl-tRNA(Sec) + AMP + diphosphate + H(+)</text>
        <dbReference type="Rhea" id="RHEA:42580"/>
        <dbReference type="Rhea" id="RHEA-COMP:9742"/>
        <dbReference type="Rhea" id="RHEA-COMP:10128"/>
        <dbReference type="ChEBI" id="CHEBI:15378"/>
        <dbReference type="ChEBI" id="CHEBI:30616"/>
        <dbReference type="ChEBI" id="CHEBI:33019"/>
        <dbReference type="ChEBI" id="CHEBI:33384"/>
        <dbReference type="ChEBI" id="CHEBI:78442"/>
        <dbReference type="ChEBI" id="CHEBI:78533"/>
        <dbReference type="ChEBI" id="CHEBI:456215"/>
        <dbReference type="EC" id="6.1.1.11"/>
    </reaction>
</comment>
<comment type="pathway">
    <text evidence="1">Aminoacyl-tRNA biosynthesis; selenocysteinyl-tRNA(Sec) biosynthesis; L-seryl-tRNA(Sec) from L-serine and tRNA(Sec): step 1/1.</text>
</comment>
<comment type="subunit">
    <text evidence="1">Homodimer. The tRNA molecule binds across the dimer.</text>
</comment>
<comment type="subcellular location">
    <subcellularLocation>
        <location evidence="1">Cytoplasm</location>
    </subcellularLocation>
</comment>
<comment type="domain">
    <text evidence="1">Consists of two distinct domains, a catalytic core and a N-terminal extension that is involved in tRNA binding.</text>
</comment>
<comment type="similarity">
    <text evidence="1">Belongs to the class-II aminoacyl-tRNA synthetase family. Type-1 seryl-tRNA synthetase subfamily.</text>
</comment>
<name>SYS_ACIF2</name>
<organism>
    <name type="scientific">Acidithiobacillus ferrooxidans (strain ATCC 23270 / DSM 14882 / CIP 104768 / NCIMB 8455)</name>
    <name type="common">Ferrobacillus ferrooxidans (strain ATCC 23270)</name>
    <dbReference type="NCBI Taxonomy" id="243159"/>
    <lineage>
        <taxon>Bacteria</taxon>
        <taxon>Pseudomonadati</taxon>
        <taxon>Pseudomonadota</taxon>
        <taxon>Acidithiobacillia</taxon>
        <taxon>Acidithiobacillales</taxon>
        <taxon>Acidithiobacillaceae</taxon>
        <taxon>Acidithiobacillus</taxon>
    </lineage>
</organism>
<evidence type="ECO:0000255" key="1">
    <source>
        <dbReference type="HAMAP-Rule" id="MF_00176"/>
    </source>
</evidence>
<gene>
    <name evidence="1" type="primary">serS</name>
    <name type="ordered locus">AFE_0380</name>
</gene>
<proteinExistence type="inferred from homology"/>
<protein>
    <recommendedName>
        <fullName evidence="1">Serine--tRNA ligase</fullName>
        <ecNumber evidence="1">6.1.1.11</ecNumber>
    </recommendedName>
    <alternativeName>
        <fullName evidence="1">Seryl-tRNA synthetase</fullName>
        <shortName evidence="1">SerRS</shortName>
    </alternativeName>
    <alternativeName>
        <fullName evidence="1">Seryl-tRNA(Ser/Sec) synthetase</fullName>
    </alternativeName>
</protein>
<dbReference type="EC" id="6.1.1.11" evidence="1"/>
<dbReference type="EMBL" id="CP001219">
    <property type="protein sequence ID" value="ACK80353.1"/>
    <property type="molecule type" value="Genomic_DNA"/>
</dbReference>
<dbReference type="RefSeq" id="WP_009566960.1">
    <property type="nucleotide sequence ID" value="NC_011761.1"/>
</dbReference>
<dbReference type="SMR" id="B7J4C9"/>
<dbReference type="STRING" id="243159.AFE_0380"/>
<dbReference type="PaxDb" id="243159-AFE_0380"/>
<dbReference type="GeneID" id="65279756"/>
<dbReference type="KEGG" id="afr:AFE_0380"/>
<dbReference type="eggNOG" id="COG0172">
    <property type="taxonomic scope" value="Bacteria"/>
</dbReference>
<dbReference type="HOGENOM" id="CLU_023797_1_1_6"/>
<dbReference type="UniPathway" id="UPA00906">
    <property type="reaction ID" value="UER00895"/>
</dbReference>
<dbReference type="Proteomes" id="UP000001362">
    <property type="component" value="Chromosome"/>
</dbReference>
<dbReference type="GO" id="GO:0005737">
    <property type="term" value="C:cytoplasm"/>
    <property type="evidence" value="ECO:0007669"/>
    <property type="project" value="UniProtKB-SubCell"/>
</dbReference>
<dbReference type="GO" id="GO:0005524">
    <property type="term" value="F:ATP binding"/>
    <property type="evidence" value="ECO:0007669"/>
    <property type="project" value="UniProtKB-UniRule"/>
</dbReference>
<dbReference type="GO" id="GO:0004828">
    <property type="term" value="F:serine-tRNA ligase activity"/>
    <property type="evidence" value="ECO:0007669"/>
    <property type="project" value="UniProtKB-UniRule"/>
</dbReference>
<dbReference type="GO" id="GO:0016260">
    <property type="term" value="P:selenocysteine biosynthetic process"/>
    <property type="evidence" value="ECO:0007669"/>
    <property type="project" value="UniProtKB-UniRule"/>
</dbReference>
<dbReference type="GO" id="GO:0006434">
    <property type="term" value="P:seryl-tRNA aminoacylation"/>
    <property type="evidence" value="ECO:0007669"/>
    <property type="project" value="UniProtKB-UniRule"/>
</dbReference>
<dbReference type="CDD" id="cd00770">
    <property type="entry name" value="SerRS_core"/>
    <property type="match status" value="1"/>
</dbReference>
<dbReference type="Gene3D" id="3.30.930.10">
    <property type="entry name" value="Bira Bifunctional Protein, Domain 2"/>
    <property type="match status" value="1"/>
</dbReference>
<dbReference type="Gene3D" id="1.10.287.40">
    <property type="entry name" value="Serine-tRNA synthetase, tRNA binding domain"/>
    <property type="match status" value="1"/>
</dbReference>
<dbReference type="HAMAP" id="MF_00176">
    <property type="entry name" value="Ser_tRNA_synth_type1"/>
    <property type="match status" value="1"/>
</dbReference>
<dbReference type="InterPro" id="IPR002314">
    <property type="entry name" value="aa-tRNA-synt_IIb"/>
</dbReference>
<dbReference type="InterPro" id="IPR006195">
    <property type="entry name" value="aa-tRNA-synth_II"/>
</dbReference>
<dbReference type="InterPro" id="IPR045864">
    <property type="entry name" value="aa-tRNA-synth_II/BPL/LPL"/>
</dbReference>
<dbReference type="InterPro" id="IPR002317">
    <property type="entry name" value="Ser-tRNA-ligase_type_1"/>
</dbReference>
<dbReference type="InterPro" id="IPR015866">
    <property type="entry name" value="Ser-tRNA-synth_1_N"/>
</dbReference>
<dbReference type="InterPro" id="IPR042103">
    <property type="entry name" value="SerRS_1_N_sf"/>
</dbReference>
<dbReference type="InterPro" id="IPR033729">
    <property type="entry name" value="SerRS_core"/>
</dbReference>
<dbReference type="InterPro" id="IPR010978">
    <property type="entry name" value="tRNA-bd_arm"/>
</dbReference>
<dbReference type="NCBIfam" id="TIGR00414">
    <property type="entry name" value="serS"/>
    <property type="match status" value="1"/>
</dbReference>
<dbReference type="PANTHER" id="PTHR43697:SF1">
    <property type="entry name" value="SERINE--TRNA LIGASE"/>
    <property type="match status" value="1"/>
</dbReference>
<dbReference type="PANTHER" id="PTHR43697">
    <property type="entry name" value="SERYL-TRNA SYNTHETASE"/>
    <property type="match status" value="1"/>
</dbReference>
<dbReference type="Pfam" id="PF02403">
    <property type="entry name" value="Seryl_tRNA_N"/>
    <property type="match status" value="1"/>
</dbReference>
<dbReference type="Pfam" id="PF00587">
    <property type="entry name" value="tRNA-synt_2b"/>
    <property type="match status" value="1"/>
</dbReference>
<dbReference type="PIRSF" id="PIRSF001529">
    <property type="entry name" value="Ser-tRNA-synth_IIa"/>
    <property type="match status" value="1"/>
</dbReference>
<dbReference type="PRINTS" id="PR00981">
    <property type="entry name" value="TRNASYNTHSER"/>
</dbReference>
<dbReference type="SUPFAM" id="SSF55681">
    <property type="entry name" value="Class II aaRS and biotin synthetases"/>
    <property type="match status" value="1"/>
</dbReference>
<dbReference type="SUPFAM" id="SSF46589">
    <property type="entry name" value="tRNA-binding arm"/>
    <property type="match status" value="1"/>
</dbReference>
<dbReference type="PROSITE" id="PS50862">
    <property type="entry name" value="AA_TRNA_LIGASE_II"/>
    <property type="match status" value="1"/>
</dbReference>
<keyword id="KW-0030">Aminoacyl-tRNA synthetase</keyword>
<keyword id="KW-0067">ATP-binding</keyword>
<keyword id="KW-0963">Cytoplasm</keyword>
<keyword id="KW-0436">Ligase</keyword>
<keyword id="KW-0547">Nucleotide-binding</keyword>
<keyword id="KW-0648">Protein biosynthesis</keyword>
<keyword id="KW-1185">Reference proteome</keyword>
<reference key="1">
    <citation type="journal article" date="2008" name="BMC Genomics">
        <title>Acidithiobacillus ferrooxidans metabolism: from genome sequence to industrial applications.</title>
        <authorList>
            <person name="Valdes J."/>
            <person name="Pedroso I."/>
            <person name="Quatrini R."/>
            <person name="Dodson R.J."/>
            <person name="Tettelin H."/>
            <person name="Blake R. II"/>
            <person name="Eisen J.A."/>
            <person name="Holmes D.S."/>
        </authorList>
    </citation>
    <scope>NUCLEOTIDE SEQUENCE [LARGE SCALE GENOMIC DNA]</scope>
    <source>
        <strain>ATCC 23270 / DSM 14882 / CIP 104768 / NCIMB 8455</strain>
    </source>
</reference>
<accession>B7J4C9</accession>
<sequence length="421" mass="46558">MLDPSLLRSSPETVAAGLARRHFTLDVAALNALDQQRKALQIQLEQLRNARNEASRQIGQARRQGLDTGAMQAAAASNGEEIKTLEQSLERTLAEWDTLTIGLPNIPQDSVPDGRDEADNVVLRHWGSPSTFAFPPRDHVELGEALGIIDFAAGARLAGTRFVVLRGAGARLERALTQFMLDLHTTEHGYTEIAPPFLANADSLYGTGQLPKFEEDLFALRDDPYYLIPTAEVPLTNLLRGEIVASLPQRFCAYTPCFRREAGAYGRDTRGMIRQHQFDKVELVQIVRPEDSAQAHETLTAHAEKVLQLLELPYRVTALCAGDLGFSAAKTYDLEVWLPGQNQYREISSCSNFESFQARRLQLRYRAEDGKPQLVHTLNGSGLAVGRTLVALLENHQQADGRIRIPAALRPYLGGMTVIQA</sequence>